<dbReference type="EC" id="2.1.1.354" evidence="2"/>
<dbReference type="EMBL" id="BA000050">
    <property type="protein sequence ID" value="BAE57242.1"/>
    <property type="molecule type" value="Genomic_DNA"/>
</dbReference>
<dbReference type="RefSeq" id="XP_001819244.1">
    <property type="nucleotide sequence ID" value="XM_001819192.1"/>
</dbReference>
<dbReference type="SMR" id="Q2UMH3"/>
<dbReference type="STRING" id="510516.Q2UMH3"/>
<dbReference type="EnsemblFungi" id="BAE57242">
    <property type="protein sequence ID" value="BAE57242"/>
    <property type="gene ID" value="AO090003000002"/>
</dbReference>
<dbReference type="GeneID" id="5992596"/>
<dbReference type="KEGG" id="aor:AO090003000002"/>
<dbReference type="VEuPathDB" id="FungiDB:AO090003000002"/>
<dbReference type="HOGENOM" id="CLU_004391_1_0_1"/>
<dbReference type="OMA" id="CHMTALF"/>
<dbReference type="OrthoDB" id="123852at5052"/>
<dbReference type="Proteomes" id="UP000006564">
    <property type="component" value="Chromosome 2"/>
</dbReference>
<dbReference type="GO" id="GO:0005694">
    <property type="term" value="C:chromosome"/>
    <property type="evidence" value="ECO:0007669"/>
    <property type="project" value="UniProtKB-SubCell"/>
</dbReference>
<dbReference type="GO" id="GO:0048188">
    <property type="term" value="C:Set1C/COMPASS complex"/>
    <property type="evidence" value="ECO:0000250"/>
    <property type="project" value="UniProtKB"/>
</dbReference>
<dbReference type="GO" id="GO:0140999">
    <property type="term" value="F:histone H3K4 trimethyltransferase activity"/>
    <property type="evidence" value="ECO:0007669"/>
    <property type="project" value="UniProtKB-EC"/>
</dbReference>
<dbReference type="GO" id="GO:0003723">
    <property type="term" value="F:RNA binding"/>
    <property type="evidence" value="ECO:0000250"/>
    <property type="project" value="UniProtKB"/>
</dbReference>
<dbReference type="GO" id="GO:0032259">
    <property type="term" value="P:methylation"/>
    <property type="evidence" value="ECO:0007669"/>
    <property type="project" value="UniProtKB-KW"/>
</dbReference>
<dbReference type="CDD" id="cd20072">
    <property type="entry name" value="SET_SET1"/>
    <property type="match status" value="1"/>
</dbReference>
<dbReference type="Gene3D" id="3.30.70.330">
    <property type="match status" value="1"/>
</dbReference>
<dbReference type="Gene3D" id="2.170.270.10">
    <property type="entry name" value="SET domain"/>
    <property type="match status" value="1"/>
</dbReference>
<dbReference type="InterPro" id="IPR024657">
    <property type="entry name" value="COMPASS_Set1_N-SET"/>
</dbReference>
<dbReference type="InterPro" id="IPR012677">
    <property type="entry name" value="Nucleotide-bd_a/b_plait_sf"/>
</dbReference>
<dbReference type="InterPro" id="IPR003616">
    <property type="entry name" value="Post-SET_dom"/>
</dbReference>
<dbReference type="InterPro" id="IPR035979">
    <property type="entry name" value="RBD_domain_sf"/>
</dbReference>
<dbReference type="InterPro" id="IPR044570">
    <property type="entry name" value="Set1-like"/>
</dbReference>
<dbReference type="InterPro" id="IPR017111">
    <property type="entry name" value="Set1_fungi"/>
</dbReference>
<dbReference type="InterPro" id="IPR024636">
    <property type="entry name" value="SET_assoc"/>
</dbReference>
<dbReference type="InterPro" id="IPR001214">
    <property type="entry name" value="SET_dom"/>
</dbReference>
<dbReference type="InterPro" id="IPR046341">
    <property type="entry name" value="SET_dom_sf"/>
</dbReference>
<dbReference type="PANTHER" id="PTHR45814">
    <property type="entry name" value="HISTONE-LYSINE N-METHYLTRANSFERASE SETD1"/>
    <property type="match status" value="1"/>
</dbReference>
<dbReference type="PANTHER" id="PTHR45814:SF2">
    <property type="entry name" value="HISTONE-LYSINE N-METHYLTRANSFERASE SETD1"/>
    <property type="match status" value="1"/>
</dbReference>
<dbReference type="Pfam" id="PF11764">
    <property type="entry name" value="N-SET"/>
    <property type="match status" value="1"/>
</dbReference>
<dbReference type="Pfam" id="PF00856">
    <property type="entry name" value="SET"/>
    <property type="match status" value="1"/>
</dbReference>
<dbReference type="Pfam" id="PF11767">
    <property type="entry name" value="SET_assoc"/>
    <property type="match status" value="1"/>
</dbReference>
<dbReference type="PIRSF" id="PIRSF037104">
    <property type="entry name" value="Histone_H3-K4_mtfrase_Set1_fun"/>
    <property type="match status" value="1"/>
</dbReference>
<dbReference type="SMART" id="SM01291">
    <property type="entry name" value="N-SET"/>
    <property type="match status" value="1"/>
</dbReference>
<dbReference type="SMART" id="SM00508">
    <property type="entry name" value="PostSET"/>
    <property type="match status" value="1"/>
</dbReference>
<dbReference type="SMART" id="SM00317">
    <property type="entry name" value="SET"/>
    <property type="match status" value="1"/>
</dbReference>
<dbReference type="SUPFAM" id="SSF54928">
    <property type="entry name" value="RNA-binding domain, RBD"/>
    <property type="match status" value="1"/>
</dbReference>
<dbReference type="SUPFAM" id="SSF82199">
    <property type="entry name" value="SET domain"/>
    <property type="match status" value="1"/>
</dbReference>
<dbReference type="PROSITE" id="PS50868">
    <property type="entry name" value="POST_SET"/>
    <property type="match status" value="1"/>
</dbReference>
<dbReference type="PROSITE" id="PS51572">
    <property type="entry name" value="SAM_MT43_1"/>
    <property type="match status" value="1"/>
</dbReference>
<dbReference type="PROSITE" id="PS50280">
    <property type="entry name" value="SET"/>
    <property type="match status" value="1"/>
</dbReference>
<keyword id="KW-0156">Chromatin regulator</keyword>
<keyword id="KW-0158">Chromosome</keyword>
<keyword id="KW-0489">Methyltransferase</keyword>
<keyword id="KW-0539">Nucleus</keyword>
<keyword id="KW-1185">Reference proteome</keyword>
<keyword id="KW-0949">S-adenosyl-L-methionine</keyword>
<keyword id="KW-0808">Transferase</keyword>
<comment type="function">
    <text evidence="1">Catalytic component of the COMPASS (Set1C) complex that specifically mono-, di- and trimethylates histone H3 to form H3K4me1/2/3. Binds RNAs which might negatively affect its histone methyltransferase activity. COMPASS recognizes ubiquitinated H2B on one face of the nucleosome which stimulates the methylation of H3 on the opposing face.</text>
</comment>
<comment type="catalytic activity">
    <reaction evidence="1">
        <text>L-lysyl(4)-[histone H3] + 3 S-adenosyl-L-methionine = N(6),N(6),N(6)-trimethyl-L-lysyl(4)-[histone H3] + 3 S-adenosyl-L-homocysteine + 3 H(+)</text>
        <dbReference type="Rhea" id="RHEA:60260"/>
        <dbReference type="Rhea" id="RHEA-COMP:15537"/>
        <dbReference type="Rhea" id="RHEA-COMP:15547"/>
        <dbReference type="ChEBI" id="CHEBI:15378"/>
        <dbReference type="ChEBI" id="CHEBI:29969"/>
        <dbReference type="ChEBI" id="CHEBI:57856"/>
        <dbReference type="ChEBI" id="CHEBI:59789"/>
        <dbReference type="ChEBI" id="CHEBI:61961"/>
        <dbReference type="EC" id="2.1.1.354"/>
    </reaction>
</comment>
<comment type="catalytic activity">
    <reaction evidence="1">
        <text>N(6)-methyl-L-lysyl(4)-[histone H3] + S-adenosyl-L-methionine = N(6),N(6)-dimethyl-L-lysyl(4)-[histone H3] + S-adenosyl-L-homocysteine + H(+)</text>
        <dbReference type="Rhea" id="RHEA:60268"/>
        <dbReference type="Rhea" id="RHEA-COMP:15540"/>
        <dbReference type="Rhea" id="RHEA-COMP:15543"/>
        <dbReference type="ChEBI" id="CHEBI:15378"/>
        <dbReference type="ChEBI" id="CHEBI:57856"/>
        <dbReference type="ChEBI" id="CHEBI:59789"/>
        <dbReference type="ChEBI" id="CHEBI:61929"/>
        <dbReference type="ChEBI" id="CHEBI:61976"/>
    </reaction>
</comment>
<comment type="catalytic activity">
    <reaction evidence="1">
        <text>N(6),N(6)-dimethyl-L-lysyl(4)-[histone H3] + S-adenosyl-L-methionine = N(6),N(6),N(6)-trimethyl-L-lysyl(4)-[histone H3] + S-adenosyl-L-homocysteine + H(+)</text>
        <dbReference type="Rhea" id="RHEA:60272"/>
        <dbReference type="Rhea" id="RHEA-COMP:15537"/>
        <dbReference type="Rhea" id="RHEA-COMP:15540"/>
        <dbReference type="ChEBI" id="CHEBI:15378"/>
        <dbReference type="ChEBI" id="CHEBI:57856"/>
        <dbReference type="ChEBI" id="CHEBI:59789"/>
        <dbReference type="ChEBI" id="CHEBI:61961"/>
        <dbReference type="ChEBI" id="CHEBI:61976"/>
    </reaction>
</comment>
<comment type="subunit">
    <text evidence="1">Component of the Set1C/COMPASS complex.</text>
</comment>
<comment type="subcellular location">
    <subcellularLocation>
        <location evidence="6">Nucleus</location>
    </subcellularLocation>
    <subcellularLocation>
        <location evidence="6">Chromosome</location>
    </subcellularLocation>
</comment>
<comment type="domain">
    <text evidence="1">The RxxxRR motif forms an adapter helix that bridges the nucleosome and ubiquitin.</text>
</comment>
<comment type="similarity">
    <text evidence="4">Belongs to the class V-like SAM-binding methyltransferase superfamily.</text>
</comment>
<reference key="1">
    <citation type="journal article" date="2005" name="Nature">
        <title>Genome sequencing and analysis of Aspergillus oryzae.</title>
        <authorList>
            <person name="Machida M."/>
            <person name="Asai K."/>
            <person name="Sano M."/>
            <person name="Tanaka T."/>
            <person name="Kumagai T."/>
            <person name="Terai G."/>
            <person name="Kusumoto K."/>
            <person name="Arima T."/>
            <person name="Akita O."/>
            <person name="Kashiwagi Y."/>
            <person name="Abe K."/>
            <person name="Gomi K."/>
            <person name="Horiuchi H."/>
            <person name="Kitamoto K."/>
            <person name="Kobayashi T."/>
            <person name="Takeuchi M."/>
            <person name="Denning D.W."/>
            <person name="Galagan J.E."/>
            <person name="Nierman W.C."/>
            <person name="Yu J."/>
            <person name="Archer D.B."/>
            <person name="Bennett J.W."/>
            <person name="Bhatnagar D."/>
            <person name="Cleveland T.E."/>
            <person name="Fedorova N.D."/>
            <person name="Gotoh O."/>
            <person name="Horikawa H."/>
            <person name="Hosoyama A."/>
            <person name="Ichinomiya M."/>
            <person name="Igarashi R."/>
            <person name="Iwashita K."/>
            <person name="Juvvadi P.R."/>
            <person name="Kato M."/>
            <person name="Kato Y."/>
            <person name="Kin T."/>
            <person name="Kokubun A."/>
            <person name="Maeda H."/>
            <person name="Maeyama N."/>
            <person name="Maruyama J."/>
            <person name="Nagasaki H."/>
            <person name="Nakajima T."/>
            <person name="Oda K."/>
            <person name="Okada K."/>
            <person name="Paulsen I."/>
            <person name="Sakamoto K."/>
            <person name="Sawano T."/>
            <person name="Takahashi M."/>
            <person name="Takase K."/>
            <person name="Terabayashi Y."/>
            <person name="Wortman J.R."/>
            <person name="Yamada O."/>
            <person name="Yamagata Y."/>
            <person name="Anazawa H."/>
            <person name="Hata Y."/>
            <person name="Koide Y."/>
            <person name="Komori T."/>
            <person name="Koyama Y."/>
            <person name="Minetoki T."/>
            <person name="Suharnan S."/>
            <person name="Tanaka A."/>
            <person name="Isono K."/>
            <person name="Kuhara S."/>
            <person name="Ogasawara N."/>
            <person name="Kikuchi H."/>
        </authorList>
    </citation>
    <scope>NUCLEOTIDE SEQUENCE [LARGE SCALE GENOMIC DNA]</scope>
    <source>
        <strain>ATCC 42149 / RIB 40</strain>
    </source>
</reference>
<sequence>MSRSSAGFADFFPTAPSVLQQKRFKVTRERPRPKAQIDSEHSDESSACPTETRAILNLSNGGASLDSGQISSTDLKKTSPESSVEGSASSTAGDRSALSLSVAQHGANSHEARLDTLTPLTNAESSPPQKANSPRNKIAEGIVANTTIDTKSGINPLHTPPTPQSQGRRTGSIRGYKLVYDPDTEKRSSSKEKRRKPRYVDIILSEQNNCPPDPRLGIPNYMRGAGCKQKRKYRPAPYTLKPWPYDASSTIGPGPPAQIVITGFDPLTPIAPISALFSSFGDIGEINNRTDPITGRFLGICSVKYKDSASFRGGGPVLAASAARRAYYECRKEQRIGTRRIRVDLDRDGVVSERFVARTIESQRMGQKSNLQSTEEVKSDSETKKNEPPPTAPKGPSGKTSVRPIVAIPEGPRANFLKPVMPSLVEEVPILGQIKRDPYIFIAHCYVPVLSTTVPHLKKRLKLFNWKDIRCDKTGYYIIFENSRRGEEETERCYKMCHMKPLFTYIMNMESQPYGNPSYERSPSPERCRAEQRERAERERLKREVGLDIEEEKRQRAVDLDPCQEVLTIIIRDLKDKLLEDVKSRIAAPALYDYLDPDRHALKRKTLGIADPEGIKRPMFRIDDSFGTPDSRSGLSDARRPFSGSTPNILALPRIRKARHLGRTDTAFLDERRKQPLRRREVRPLYHRLQQLHDVDDSDDEQRTPKDTDEQDSRPPSRMSSGTSESDDGDGFVSEALGLPVVELAGSGQNKEPDEILKDNQSVGESSQLESNEISPELRKRKRASEELEARKRQKEDDELFGINPIAEAEVEGTQIIATPIAVDINLEVSEAALSILPKESNDNRQETGEANHLDFDGIDVTSSTIEKDRRGILDPLDDIDNAAAREESRTEVGWRVSNDEPRPIVDDDDAIIMDLDGWQNLIKDDEDLHFLRDILVGYSESNVGNLSAWAWRQKEIKALNHPGDVGPLRGGTGIAGYYVPNTTGAARTEGRKRILESEKSKYLPHRIKVQKAREEREARAKNDPHTAAVEAARVAAAKNISKSTSRSTRVNNRRLIADINAQKQALPTQSGDGDVLRFNQLKKRKKPVRFARSAIHNWGLYAEENISANDMIIEYVGEKVRQQVADMRERQYLKSGIGSSYLFRIDENTVIDATKRGGIARFINHSCTPNCTAKIIKVDGSKRIVIYALRDIERDEELTYDYKFEREWDSDDRIPCLCGSTGCKGFLN</sequence>
<gene>
    <name type="primary">set1</name>
    <name type="ORF">AO090003000002</name>
</gene>
<organism>
    <name type="scientific">Aspergillus oryzae (strain ATCC 42149 / RIB 40)</name>
    <name type="common">Yellow koji mold</name>
    <dbReference type="NCBI Taxonomy" id="510516"/>
    <lineage>
        <taxon>Eukaryota</taxon>
        <taxon>Fungi</taxon>
        <taxon>Dikarya</taxon>
        <taxon>Ascomycota</taxon>
        <taxon>Pezizomycotina</taxon>
        <taxon>Eurotiomycetes</taxon>
        <taxon>Eurotiomycetidae</taxon>
        <taxon>Eurotiales</taxon>
        <taxon>Aspergillaceae</taxon>
        <taxon>Aspergillus</taxon>
        <taxon>Aspergillus subgen. Circumdati</taxon>
    </lineage>
</organism>
<evidence type="ECO:0000250" key="1">
    <source>
        <dbReference type="UniProtKB" id="P38827"/>
    </source>
</evidence>
<evidence type="ECO:0000250" key="2">
    <source>
        <dbReference type="UniProtKB" id="Q9Y7R4"/>
    </source>
</evidence>
<evidence type="ECO:0000255" key="3">
    <source>
        <dbReference type="PROSITE-ProRule" id="PRU00155"/>
    </source>
</evidence>
<evidence type="ECO:0000255" key="4">
    <source>
        <dbReference type="PROSITE-ProRule" id="PRU00190"/>
    </source>
</evidence>
<evidence type="ECO:0000256" key="5">
    <source>
        <dbReference type="SAM" id="MobiDB-lite"/>
    </source>
</evidence>
<evidence type="ECO:0000305" key="6"/>
<accession>Q2UMH3</accession>
<name>SET1_ASPOR</name>
<protein>
    <recommendedName>
        <fullName>Histone-lysine N-methyltransferase, H3 lysine-4 specific</fullName>
        <ecNumber evidence="2">2.1.1.354</ecNumber>
    </recommendedName>
    <alternativeName>
        <fullName>COMPASS component SET1</fullName>
    </alternativeName>
    <alternativeName>
        <fullName>SET domain-containing protein 1</fullName>
    </alternativeName>
</protein>
<proteinExistence type="inferred from homology"/>
<feature type="chain" id="PRO_0000269766" description="Histone-lysine N-methyltransferase, H3 lysine-4 specific">
    <location>
        <begin position="1"/>
        <end position="1229"/>
    </location>
</feature>
<feature type="domain" description="SET" evidence="4">
    <location>
        <begin position="1087"/>
        <end position="1204"/>
    </location>
</feature>
<feature type="domain" description="Post-SET" evidence="3">
    <location>
        <begin position="1213"/>
        <end position="1229"/>
    </location>
</feature>
<feature type="region of interest" description="Disordered" evidence="5">
    <location>
        <begin position="22"/>
        <end position="198"/>
    </location>
</feature>
<feature type="region of interest" description="Disordered" evidence="5">
    <location>
        <begin position="362"/>
        <end position="403"/>
    </location>
</feature>
<feature type="region of interest" description="Disordered" evidence="5">
    <location>
        <begin position="514"/>
        <end position="541"/>
    </location>
</feature>
<feature type="region of interest" description="Disordered" evidence="5">
    <location>
        <begin position="620"/>
        <end position="656"/>
    </location>
</feature>
<feature type="region of interest" description="Disordered" evidence="5">
    <location>
        <begin position="679"/>
        <end position="733"/>
    </location>
</feature>
<feature type="region of interest" description="Disordered" evidence="5">
    <location>
        <begin position="746"/>
        <end position="796"/>
    </location>
</feature>
<feature type="short sequence motif" description="RxxxRR motif" evidence="1">
    <location>
        <begin position="1050"/>
        <end position="1055"/>
    </location>
</feature>
<feature type="compositionally biased region" description="Basic and acidic residues" evidence="5">
    <location>
        <begin position="26"/>
        <end position="44"/>
    </location>
</feature>
<feature type="compositionally biased region" description="Polar residues" evidence="5">
    <location>
        <begin position="57"/>
        <end position="73"/>
    </location>
</feature>
<feature type="compositionally biased region" description="Low complexity" evidence="5">
    <location>
        <begin position="80"/>
        <end position="93"/>
    </location>
</feature>
<feature type="compositionally biased region" description="Polar residues" evidence="5">
    <location>
        <begin position="118"/>
        <end position="135"/>
    </location>
</feature>
<feature type="compositionally biased region" description="Polar residues" evidence="5">
    <location>
        <begin position="144"/>
        <end position="153"/>
    </location>
</feature>
<feature type="compositionally biased region" description="Polar residues" evidence="5">
    <location>
        <begin position="362"/>
        <end position="374"/>
    </location>
</feature>
<feature type="compositionally biased region" description="Basic and acidic residues" evidence="5">
    <location>
        <begin position="375"/>
        <end position="387"/>
    </location>
</feature>
<feature type="compositionally biased region" description="Basic and acidic residues" evidence="5">
    <location>
        <begin position="523"/>
        <end position="541"/>
    </location>
</feature>
<feature type="compositionally biased region" description="Basic and acidic residues" evidence="5">
    <location>
        <begin position="691"/>
        <end position="715"/>
    </location>
</feature>
<feature type="compositionally biased region" description="Polar residues" evidence="5">
    <location>
        <begin position="759"/>
        <end position="774"/>
    </location>
</feature>
<feature type="compositionally biased region" description="Basic and acidic residues" evidence="5">
    <location>
        <begin position="784"/>
        <end position="796"/>
    </location>
</feature>
<feature type="binding site" evidence="4">
    <location>
        <position position="1203"/>
    </location>
    <ligand>
        <name>S-adenosyl-L-methionine</name>
        <dbReference type="ChEBI" id="CHEBI:59789"/>
    </ligand>
</feature>